<dbReference type="EC" id="2.7.1.11" evidence="1"/>
<dbReference type="EMBL" id="AB032270">
    <property type="protein sequence ID" value="BAB12230.1"/>
    <property type="molecule type" value="mRNA"/>
</dbReference>
<dbReference type="EMBL" id="BA000050">
    <property type="protein sequence ID" value="BAE58448.1"/>
    <property type="molecule type" value="Genomic_DNA"/>
</dbReference>
<dbReference type="SMR" id="Q9HGZ1"/>
<dbReference type="STRING" id="510516.Q9HGZ1"/>
<dbReference type="EnsemblFungi" id="BAE58448">
    <property type="protein sequence ID" value="BAE58448"/>
    <property type="gene ID" value="AO090003001390"/>
</dbReference>
<dbReference type="HOGENOM" id="CLU_011053_0_0_1"/>
<dbReference type="OMA" id="EWQDQMC"/>
<dbReference type="UniPathway" id="UPA00109">
    <property type="reaction ID" value="UER00182"/>
</dbReference>
<dbReference type="Proteomes" id="UP000006564">
    <property type="component" value="Chromosome 2"/>
</dbReference>
<dbReference type="GO" id="GO:0005945">
    <property type="term" value="C:6-phosphofructokinase complex"/>
    <property type="evidence" value="ECO:0007669"/>
    <property type="project" value="TreeGrafter"/>
</dbReference>
<dbReference type="GO" id="GO:0005739">
    <property type="term" value="C:mitochondrion"/>
    <property type="evidence" value="ECO:0007669"/>
    <property type="project" value="TreeGrafter"/>
</dbReference>
<dbReference type="GO" id="GO:0003872">
    <property type="term" value="F:6-phosphofructokinase activity"/>
    <property type="evidence" value="ECO:0007669"/>
    <property type="project" value="UniProtKB-UniRule"/>
</dbReference>
<dbReference type="GO" id="GO:0016208">
    <property type="term" value="F:AMP binding"/>
    <property type="evidence" value="ECO:0007669"/>
    <property type="project" value="TreeGrafter"/>
</dbReference>
<dbReference type="GO" id="GO:0005524">
    <property type="term" value="F:ATP binding"/>
    <property type="evidence" value="ECO:0007669"/>
    <property type="project" value="UniProtKB-KW"/>
</dbReference>
<dbReference type="GO" id="GO:0070095">
    <property type="term" value="F:fructose-6-phosphate binding"/>
    <property type="evidence" value="ECO:0007669"/>
    <property type="project" value="TreeGrafter"/>
</dbReference>
<dbReference type="GO" id="GO:0042802">
    <property type="term" value="F:identical protein binding"/>
    <property type="evidence" value="ECO:0007669"/>
    <property type="project" value="TreeGrafter"/>
</dbReference>
<dbReference type="GO" id="GO:0046872">
    <property type="term" value="F:metal ion binding"/>
    <property type="evidence" value="ECO:0007669"/>
    <property type="project" value="UniProtKB-KW"/>
</dbReference>
<dbReference type="GO" id="GO:0048029">
    <property type="term" value="F:monosaccharide binding"/>
    <property type="evidence" value="ECO:0007669"/>
    <property type="project" value="TreeGrafter"/>
</dbReference>
<dbReference type="GO" id="GO:0061621">
    <property type="term" value="P:canonical glycolysis"/>
    <property type="evidence" value="ECO:0007669"/>
    <property type="project" value="TreeGrafter"/>
</dbReference>
<dbReference type="GO" id="GO:0030388">
    <property type="term" value="P:fructose 1,6-bisphosphate metabolic process"/>
    <property type="evidence" value="ECO:0007669"/>
    <property type="project" value="TreeGrafter"/>
</dbReference>
<dbReference type="GO" id="GO:0006002">
    <property type="term" value="P:fructose 6-phosphate metabolic process"/>
    <property type="evidence" value="ECO:0007669"/>
    <property type="project" value="InterPro"/>
</dbReference>
<dbReference type="FunFam" id="3.40.50.450:FF:000010">
    <property type="entry name" value="ATP-dependent 6-phosphofructokinase"/>
    <property type="match status" value="1"/>
</dbReference>
<dbReference type="FunFam" id="3.40.50.460:FF:000007">
    <property type="entry name" value="ATP-dependent 6-phosphofructokinase"/>
    <property type="match status" value="1"/>
</dbReference>
<dbReference type="FunFam" id="3.40.50.460:FF:000008">
    <property type="entry name" value="ATP-dependent 6-phosphofructokinase"/>
    <property type="match status" value="1"/>
</dbReference>
<dbReference type="Gene3D" id="3.40.50.450">
    <property type="match status" value="2"/>
</dbReference>
<dbReference type="Gene3D" id="3.40.50.460">
    <property type="entry name" value="Phosphofructokinase domain"/>
    <property type="match status" value="2"/>
</dbReference>
<dbReference type="HAMAP" id="MF_03184">
    <property type="entry name" value="Phosphofructokinase_I_E"/>
    <property type="match status" value="1"/>
</dbReference>
<dbReference type="InterPro" id="IPR009161">
    <property type="entry name" value="6-Pfructokinase_euk"/>
</dbReference>
<dbReference type="InterPro" id="IPR022953">
    <property type="entry name" value="ATP_PFK"/>
</dbReference>
<dbReference type="InterPro" id="IPR015912">
    <property type="entry name" value="Phosphofructokinase_CS"/>
</dbReference>
<dbReference type="InterPro" id="IPR000023">
    <property type="entry name" value="Phosphofructokinase_dom"/>
</dbReference>
<dbReference type="InterPro" id="IPR035966">
    <property type="entry name" value="PKF_sf"/>
</dbReference>
<dbReference type="NCBIfam" id="TIGR02478">
    <property type="entry name" value="6PF1K_euk"/>
    <property type="match status" value="1"/>
</dbReference>
<dbReference type="PANTHER" id="PTHR13697:SF4">
    <property type="entry name" value="ATP-DEPENDENT 6-PHOSPHOFRUCTOKINASE"/>
    <property type="match status" value="1"/>
</dbReference>
<dbReference type="PANTHER" id="PTHR13697">
    <property type="entry name" value="PHOSPHOFRUCTOKINASE"/>
    <property type="match status" value="1"/>
</dbReference>
<dbReference type="Pfam" id="PF00365">
    <property type="entry name" value="PFK"/>
    <property type="match status" value="2"/>
</dbReference>
<dbReference type="PIRSF" id="PIRSF000533">
    <property type="entry name" value="ATP_PFK_euk"/>
    <property type="match status" value="1"/>
</dbReference>
<dbReference type="PRINTS" id="PR00476">
    <property type="entry name" value="PHFRCTKINASE"/>
</dbReference>
<dbReference type="SUPFAM" id="SSF53784">
    <property type="entry name" value="Phosphofructokinase"/>
    <property type="match status" value="2"/>
</dbReference>
<dbReference type="PROSITE" id="PS00433">
    <property type="entry name" value="PHOSPHOFRUCTOKINASE"/>
    <property type="match status" value="2"/>
</dbReference>
<comment type="function">
    <text evidence="1">Catalyzes the phosphorylation of D-fructose 6-phosphate to fructose 1,6-bisphosphate by ATP, the first committing step of glycolysis.</text>
</comment>
<comment type="catalytic activity">
    <reaction evidence="1">
        <text>beta-D-fructose 6-phosphate + ATP = beta-D-fructose 1,6-bisphosphate + ADP + H(+)</text>
        <dbReference type="Rhea" id="RHEA:16109"/>
        <dbReference type="ChEBI" id="CHEBI:15378"/>
        <dbReference type="ChEBI" id="CHEBI:30616"/>
        <dbReference type="ChEBI" id="CHEBI:32966"/>
        <dbReference type="ChEBI" id="CHEBI:57634"/>
        <dbReference type="ChEBI" id="CHEBI:456216"/>
        <dbReference type="EC" id="2.7.1.11"/>
    </reaction>
</comment>
<comment type="cofactor">
    <cofactor evidence="1">
        <name>Mg(2+)</name>
        <dbReference type="ChEBI" id="CHEBI:18420"/>
    </cofactor>
</comment>
<comment type="activity regulation">
    <text evidence="1">Allosterically activated by ADP, AMP, or fructose 2,6-bisphosphate, and allosterically inhibited by ATP or citrate.</text>
</comment>
<comment type="pathway">
    <text evidence="1">Carbohydrate degradation; glycolysis; D-glyceraldehyde 3-phosphate and glycerone phosphate from D-glucose: step 3/4.</text>
</comment>
<comment type="subunit">
    <text evidence="1">Homotetramer.</text>
</comment>
<comment type="subcellular location">
    <subcellularLocation>
        <location evidence="1">Cytoplasm</location>
    </subcellularLocation>
</comment>
<comment type="similarity">
    <text evidence="1">Belongs to the phosphofructokinase type A (PFKA) family. ATP-dependent PFK group I subfamily. Eukaryotic two domain clade 'E' sub-subfamily.</text>
</comment>
<accession>Q9HGZ1</accession>
<accession>Q2UJ17</accession>
<gene>
    <name type="primary">pfkA</name>
    <name type="ORF">AO090003001390</name>
</gene>
<name>PFKA1_ASPOR</name>
<keyword id="KW-0021">Allosteric enzyme</keyword>
<keyword id="KW-0067">ATP-binding</keyword>
<keyword id="KW-0963">Cytoplasm</keyword>
<keyword id="KW-0324">Glycolysis</keyword>
<keyword id="KW-0418">Kinase</keyword>
<keyword id="KW-0460">Magnesium</keyword>
<keyword id="KW-0479">Metal-binding</keyword>
<keyword id="KW-0547">Nucleotide-binding</keyword>
<keyword id="KW-1185">Reference proteome</keyword>
<keyword id="KW-0808">Transferase</keyword>
<proteinExistence type="evidence at transcript level"/>
<sequence>MATTHAPAEPPKRRRIGVLTSGGDAPGMNGAVRAVVRMAIYSGCEAYAVYEGYEGLVHGGDMIRQVHWEDVRGWLSRGGTLIGSARSMAFRERAGRLKAAKNMIVRGIDALVVCGGDGSLTGADLFRSEWPGLLEELVKTGELTEEQIVPYKVLNIVGLVGSIDNDMSGTDATIGCYSSLTRICDAVDDVFDTAYSHQRGFVIEVMGRHCGWLALMSAISTGADWLFIPEMPPREGWEDDMCDIITKNRQERGKRRTIVIVAEGAHDRQLNKITSSKIKDILTNRLDLDTRVTVLGHTQRGGAACAYDRTLSTLQGVEAVRAVLDMTPESPSPVITVRENKLLRTPLMDAVKATKEVADLIHERKFDEAMHLRDSEFKEYHFAYKNTATPDHPKLILPENKRMRIAIIHVGAPAGGMNQATRAAVAYCQTRGHTALAVHNGFPGLCRHHADTPVSSVREVSWEEQDTWVNEGGSDIGTNRSLPSEDFETTAKCFEKFKFDGLFVVGGFEAFTAVSQLRQAREKYPAFKIPMVVLPATISNNVPGTEYSLGSDTCLNTLIDFCDAIRQSASSSRRRVFVVETQGGKSGYVATTAGLAVGASAVYIPEEGIDIKMLARDIDFLRNNFAHDKGANRAGKIILRNETASSTYTTQVIADMIKEEAKGRFESRAAVPGHFQQGGKPSPMDRIRALRMAIRCMQHIETFSGKSADEIAADELSATVIGVKGSQVLFSQMGGPNGLEATETDWARRRPKDEFWLDLQSTVNILSGRASFGEGKTGWSCYENC</sequence>
<evidence type="ECO:0000255" key="1">
    <source>
        <dbReference type="HAMAP-Rule" id="MF_03184"/>
    </source>
</evidence>
<reference key="1">
    <citation type="submission" date="1999-09" db="EMBL/GenBank/DDBJ databases">
        <title>Molecular cloning and characterization of glycolytic gene from Aspergillus oryzae.</title>
        <authorList>
            <person name="Nakajima K."/>
            <person name="Kunihiro S."/>
            <person name="Sano M."/>
            <person name="Eto S."/>
            <person name="Machida M."/>
        </authorList>
    </citation>
    <scope>NUCLEOTIDE SEQUENCE [MRNA]</scope>
    <source>
        <strain>ATCC 42149 / RIB 40</strain>
    </source>
</reference>
<reference key="2">
    <citation type="journal article" date="2005" name="Nature">
        <title>Genome sequencing and analysis of Aspergillus oryzae.</title>
        <authorList>
            <person name="Machida M."/>
            <person name="Asai K."/>
            <person name="Sano M."/>
            <person name="Tanaka T."/>
            <person name="Kumagai T."/>
            <person name="Terai G."/>
            <person name="Kusumoto K."/>
            <person name="Arima T."/>
            <person name="Akita O."/>
            <person name="Kashiwagi Y."/>
            <person name="Abe K."/>
            <person name="Gomi K."/>
            <person name="Horiuchi H."/>
            <person name="Kitamoto K."/>
            <person name="Kobayashi T."/>
            <person name="Takeuchi M."/>
            <person name="Denning D.W."/>
            <person name="Galagan J.E."/>
            <person name="Nierman W.C."/>
            <person name="Yu J."/>
            <person name="Archer D.B."/>
            <person name="Bennett J.W."/>
            <person name="Bhatnagar D."/>
            <person name="Cleveland T.E."/>
            <person name="Fedorova N.D."/>
            <person name="Gotoh O."/>
            <person name="Horikawa H."/>
            <person name="Hosoyama A."/>
            <person name="Ichinomiya M."/>
            <person name="Igarashi R."/>
            <person name="Iwashita K."/>
            <person name="Juvvadi P.R."/>
            <person name="Kato M."/>
            <person name="Kato Y."/>
            <person name="Kin T."/>
            <person name="Kokubun A."/>
            <person name="Maeda H."/>
            <person name="Maeyama N."/>
            <person name="Maruyama J."/>
            <person name="Nagasaki H."/>
            <person name="Nakajima T."/>
            <person name="Oda K."/>
            <person name="Okada K."/>
            <person name="Paulsen I."/>
            <person name="Sakamoto K."/>
            <person name="Sawano T."/>
            <person name="Takahashi M."/>
            <person name="Takase K."/>
            <person name="Terabayashi Y."/>
            <person name="Wortman J.R."/>
            <person name="Yamada O."/>
            <person name="Yamagata Y."/>
            <person name="Anazawa H."/>
            <person name="Hata Y."/>
            <person name="Koide Y."/>
            <person name="Komori T."/>
            <person name="Koyama Y."/>
            <person name="Minetoki T."/>
            <person name="Suharnan S."/>
            <person name="Tanaka A."/>
            <person name="Isono K."/>
            <person name="Kuhara S."/>
            <person name="Ogasawara N."/>
            <person name="Kikuchi H."/>
        </authorList>
    </citation>
    <scope>NUCLEOTIDE SEQUENCE [LARGE SCALE GENOMIC DNA]</scope>
    <source>
        <strain>ATCC 42149 / RIB 40</strain>
    </source>
</reference>
<feature type="chain" id="PRO_0000112036" description="ATP-dependent 6-phosphofructokinase 1">
    <location>
        <begin position="1"/>
        <end position="785"/>
    </location>
</feature>
<feature type="region of interest" description="N-terminal catalytic PFK domain 1">
    <location>
        <begin position="1"/>
        <end position="389"/>
    </location>
</feature>
<feature type="region of interest" description="Interdomain linker">
    <location>
        <begin position="390"/>
        <end position="403"/>
    </location>
</feature>
<feature type="region of interest" description="C-terminal regulatory PFK domain 2">
    <location>
        <begin position="404"/>
        <end position="785"/>
    </location>
</feature>
<feature type="active site" description="Proton acceptor" evidence="1">
    <location>
        <position position="164"/>
    </location>
</feature>
<feature type="binding site" evidence="1">
    <location>
        <position position="23"/>
    </location>
    <ligand>
        <name>ATP</name>
        <dbReference type="ChEBI" id="CHEBI:30616"/>
    </ligand>
</feature>
<feature type="binding site" evidence="1">
    <location>
        <begin position="86"/>
        <end position="87"/>
    </location>
    <ligand>
        <name>ATP</name>
        <dbReference type="ChEBI" id="CHEBI:30616"/>
    </ligand>
</feature>
<feature type="binding site" evidence="1">
    <location>
        <begin position="116"/>
        <end position="119"/>
    </location>
    <ligand>
        <name>ATP</name>
        <dbReference type="ChEBI" id="CHEBI:30616"/>
    </ligand>
</feature>
<feature type="binding site" evidence="1">
    <location>
        <position position="117"/>
    </location>
    <ligand>
        <name>Mg(2+)</name>
        <dbReference type="ChEBI" id="CHEBI:18420"/>
        <note>catalytic</note>
    </ligand>
</feature>
<feature type="binding site" description="in other chain" evidence="1">
    <location>
        <begin position="162"/>
        <end position="164"/>
    </location>
    <ligand>
        <name>substrate</name>
        <note>ligand shared between dimeric partners</note>
    </ligand>
</feature>
<feature type="binding site" evidence="1">
    <location>
        <position position="199"/>
    </location>
    <ligand>
        <name>substrate</name>
        <note>ligand shared between dimeric partners</note>
    </ligand>
</feature>
<feature type="binding site" description="in other chain" evidence="1">
    <location>
        <begin position="206"/>
        <end position="208"/>
    </location>
    <ligand>
        <name>substrate</name>
        <note>ligand shared between dimeric partners</note>
    </ligand>
</feature>
<feature type="binding site" description="in other chain" evidence="1">
    <location>
        <position position="263"/>
    </location>
    <ligand>
        <name>substrate</name>
        <note>ligand shared between dimeric partners</note>
    </ligand>
</feature>
<feature type="binding site" evidence="1">
    <location>
        <position position="291"/>
    </location>
    <ligand>
        <name>substrate</name>
        <note>ligand shared between dimeric partners</note>
    </ligand>
</feature>
<feature type="binding site" description="in other chain" evidence="1">
    <location>
        <begin position="297"/>
        <end position="300"/>
    </location>
    <ligand>
        <name>substrate</name>
        <note>ligand shared between dimeric partners</note>
    </ligand>
</feature>
<feature type="binding site" description="in other chain" evidence="1">
    <location>
        <position position="480"/>
    </location>
    <ligand>
        <name>beta-D-fructose 2,6-bisphosphate</name>
        <dbReference type="ChEBI" id="CHEBI:58579"/>
        <note>allosteric activator; ligand shared between dimeric partners</note>
    </ligand>
</feature>
<feature type="binding site" description="in other chain" evidence="1">
    <location>
        <begin position="537"/>
        <end position="541"/>
    </location>
    <ligand>
        <name>beta-D-fructose 2,6-bisphosphate</name>
        <dbReference type="ChEBI" id="CHEBI:58579"/>
        <note>allosteric activator; ligand shared between dimeric partners</note>
    </ligand>
</feature>
<feature type="binding site" evidence="1">
    <location>
        <position position="575"/>
    </location>
    <ligand>
        <name>beta-D-fructose 2,6-bisphosphate</name>
        <dbReference type="ChEBI" id="CHEBI:58579"/>
        <note>allosteric activator; ligand shared between dimeric partners</note>
    </ligand>
</feature>
<feature type="binding site" description="in other chain" evidence="1">
    <location>
        <begin position="582"/>
        <end position="584"/>
    </location>
    <ligand>
        <name>beta-D-fructose 2,6-bisphosphate</name>
        <dbReference type="ChEBI" id="CHEBI:58579"/>
        <note>allosteric activator; ligand shared between dimeric partners</note>
    </ligand>
</feature>
<feature type="binding site" description="in other chain" evidence="1">
    <location>
        <position position="642"/>
    </location>
    <ligand>
        <name>beta-D-fructose 2,6-bisphosphate</name>
        <dbReference type="ChEBI" id="CHEBI:58579"/>
        <note>allosteric activator; ligand shared between dimeric partners</note>
    </ligand>
</feature>
<feature type="binding site" evidence="1">
    <location>
        <position position="668"/>
    </location>
    <ligand>
        <name>beta-D-fructose 2,6-bisphosphate</name>
        <dbReference type="ChEBI" id="CHEBI:58579"/>
        <note>allosteric activator; ligand shared between dimeric partners</note>
    </ligand>
</feature>
<feature type="binding site" description="in other chain" evidence="1">
    <location>
        <begin position="674"/>
        <end position="677"/>
    </location>
    <ligand>
        <name>beta-D-fructose 2,6-bisphosphate</name>
        <dbReference type="ChEBI" id="CHEBI:58579"/>
        <note>allosteric activator; ligand shared between dimeric partners</note>
    </ligand>
</feature>
<feature type="binding site" description="in other chain" evidence="1">
    <location>
        <position position="749"/>
    </location>
    <ligand>
        <name>beta-D-fructose 2,6-bisphosphate</name>
        <dbReference type="ChEBI" id="CHEBI:58579"/>
        <note>allosteric activator; ligand shared between dimeric partners</note>
    </ligand>
</feature>
<organism>
    <name type="scientific">Aspergillus oryzae (strain ATCC 42149 / RIB 40)</name>
    <name type="common">Yellow koji mold</name>
    <dbReference type="NCBI Taxonomy" id="510516"/>
    <lineage>
        <taxon>Eukaryota</taxon>
        <taxon>Fungi</taxon>
        <taxon>Dikarya</taxon>
        <taxon>Ascomycota</taxon>
        <taxon>Pezizomycotina</taxon>
        <taxon>Eurotiomycetes</taxon>
        <taxon>Eurotiomycetidae</taxon>
        <taxon>Eurotiales</taxon>
        <taxon>Aspergillaceae</taxon>
        <taxon>Aspergillus</taxon>
        <taxon>Aspergillus subgen. Circumdati</taxon>
    </lineage>
</organism>
<protein>
    <recommendedName>
        <fullName evidence="1">ATP-dependent 6-phosphofructokinase 1</fullName>
        <shortName evidence="1">ATP-PFK 1</shortName>
        <shortName evidence="1">Phosphofructokinase 1</shortName>
        <ecNumber evidence="1">2.7.1.11</ecNumber>
    </recommendedName>
    <alternativeName>
        <fullName evidence="1">Phosphohexokinase 1</fullName>
    </alternativeName>
</protein>